<name>TRMD_BARHE</name>
<organism>
    <name type="scientific">Bartonella henselae (strain ATCC 49882 / DSM 28221 / CCUG 30454 / Houston 1)</name>
    <name type="common">Rochalimaea henselae</name>
    <dbReference type="NCBI Taxonomy" id="283166"/>
    <lineage>
        <taxon>Bacteria</taxon>
        <taxon>Pseudomonadati</taxon>
        <taxon>Pseudomonadota</taxon>
        <taxon>Alphaproteobacteria</taxon>
        <taxon>Hyphomicrobiales</taxon>
        <taxon>Bartonellaceae</taxon>
        <taxon>Bartonella</taxon>
    </lineage>
</organism>
<sequence length="232" mass="25463">MKFQARVLTLYPEMFPGFLGCSLAGQALKQGIWSLETVQIRDFALDKHHSVDDTPAGGGAGMVMRADVLAAALDSCPNDSPRLLMSPRGRLLNQAYARSLARSSGVTLVCGRFEGVDERIIEARELEEVSIGDYILSGGETAALVLLDAIVRLLPGVMGNEISAKCESFENGLLEHPQYTRPAVFEGRGIPPVLTSGHHKAIANWRQQQAESLTRQRRPDLYALYNKNRQKT</sequence>
<protein>
    <recommendedName>
        <fullName evidence="1">tRNA (guanine-N(1)-)-methyltransferase</fullName>
        <ecNumber evidence="1">2.1.1.228</ecNumber>
    </recommendedName>
    <alternativeName>
        <fullName evidence="1">M1G-methyltransferase</fullName>
    </alternativeName>
    <alternativeName>
        <fullName evidence="1">tRNA [GM37] methyltransferase</fullName>
    </alternativeName>
</protein>
<dbReference type="EC" id="2.1.1.228" evidence="1"/>
<dbReference type="EMBL" id="BX897699">
    <property type="protein sequence ID" value="CAF28345.1"/>
    <property type="molecule type" value="Genomic_DNA"/>
</dbReference>
<dbReference type="RefSeq" id="WP_011181348.1">
    <property type="nucleotide sequence ID" value="NZ_LRIJ02000001.1"/>
</dbReference>
<dbReference type="PDB" id="3IEF">
    <property type="method" value="X-ray"/>
    <property type="resolution" value="2.50 A"/>
    <property type="chains" value="A/B=1-232"/>
</dbReference>
<dbReference type="PDBsum" id="3IEF"/>
<dbReference type="SMR" id="Q6G1R9"/>
<dbReference type="PaxDb" id="283166-BH15820"/>
<dbReference type="EnsemblBacteria" id="CAF28345">
    <property type="protein sequence ID" value="CAF28345"/>
    <property type="gene ID" value="BH15820"/>
</dbReference>
<dbReference type="GeneID" id="92986203"/>
<dbReference type="KEGG" id="bhe:BH15820"/>
<dbReference type="eggNOG" id="COG0336">
    <property type="taxonomic scope" value="Bacteria"/>
</dbReference>
<dbReference type="OrthoDB" id="9807416at2"/>
<dbReference type="EvolutionaryTrace" id="Q6G1R9"/>
<dbReference type="Proteomes" id="UP000000421">
    <property type="component" value="Chromosome"/>
</dbReference>
<dbReference type="GO" id="GO:0005829">
    <property type="term" value="C:cytosol"/>
    <property type="evidence" value="ECO:0007669"/>
    <property type="project" value="TreeGrafter"/>
</dbReference>
<dbReference type="GO" id="GO:0052906">
    <property type="term" value="F:tRNA (guanine(37)-N1)-methyltransferase activity"/>
    <property type="evidence" value="ECO:0007669"/>
    <property type="project" value="UniProtKB-UniRule"/>
</dbReference>
<dbReference type="GO" id="GO:0002939">
    <property type="term" value="P:tRNA N1-guanine methylation"/>
    <property type="evidence" value="ECO:0007669"/>
    <property type="project" value="TreeGrafter"/>
</dbReference>
<dbReference type="CDD" id="cd18080">
    <property type="entry name" value="TrmD-like"/>
    <property type="match status" value="1"/>
</dbReference>
<dbReference type="FunFam" id="3.40.1280.10:FF:000001">
    <property type="entry name" value="tRNA (guanine-N(1)-)-methyltransferase"/>
    <property type="match status" value="1"/>
</dbReference>
<dbReference type="Gene3D" id="3.40.1280.10">
    <property type="match status" value="1"/>
</dbReference>
<dbReference type="Gene3D" id="1.10.1270.20">
    <property type="entry name" value="tRNA(m1g37)methyltransferase, domain 2"/>
    <property type="match status" value="1"/>
</dbReference>
<dbReference type="HAMAP" id="MF_00605">
    <property type="entry name" value="TrmD"/>
    <property type="match status" value="1"/>
</dbReference>
<dbReference type="InterPro" id="IPR029028">
    <property type="entry name" value="Alpha/beta_knot_MTases"/>
</dbReference>
<dbReference type="InterPro" id="IPR023148">
    <property type="entry name" value="tRNA_m1G_MeTrfase_C_sf"/>
</dbReference>
<dbReference type="InterPro" id="IPR002649">
    <property type="entry name" value="tRNA_m1G_MeTrfase_TrmD"/>
</dbReference>
<dbReference type="InterPro" id="IPR029026">
    <property type="entry name" value="tRNA_m1G_MTases_N"/>
</dbReference>
<dbReference type="InterPro" id="IPR016009">
    <property type="entry name" value="tRNA_MeTrfase_TRMD/TRM10"/>
</dbReference>
<dbReference type="NCBIfam" id="NF000648">
    <property type="entry name" value="PRK00026.1"/>
    <property type="match status" value="1"/>
</dbReference>
<dbReference type="NCBIfam" id="TIGR00088">
    <property type="entry name" value="trmD"/>
    <property type="match status" value="1"/>
</dbReference>
<dbReference type="PANTHER" id="PTHR46417">
    <property type="entry name" value="TRNA (GUANINE-N(1)-)-METHYLTRANSFERASE"/>
    <property type="match status" value="1"/>
</dbReference>
<dbReference type="PANTHER" id="PTHR46417:SF1">
    <property type="entry name" value="TRNA (GUANINE-N(1)-)-METHYLTRANSFERASE"/>
    <property type="match status" value="1"/>
</dbReference>
<dbReference type="Pfam" id="PF01746">
    <property type="entry name" value="tRNA_m1G_MT"/>
    <property type="match status" value="1"/>
</dbReference>
<dbReference type="PIRSF" id="PIRSF000386">
    <property type="entry name" value="tRNA_mtase"/>
    <property type="match status" value="1"/>
</dbReference>
<dbReference type="SUPFAM" id="SSF75217">
    <property type="entry name" value="alpha/beta knot"/>
    <property type="match status" value="1"/>
</dbReference>
<comment type="function">
    <text evidence="1">Specifically methylates guanosine-37 in various tRNAs.</text>
</comment>
<comment type="catalytic activity">
    <reaction evidence="1">
        <text>guanosine(37) in tRNA + S-adenosyl-L-methionine = N(1)-methylguanosine(37) in tRNA + S-adenosyl-L-homocysteine + H(+)</text>
        <dbReference type="Rhea" id="RHEA:36899"/>
        <dbReference type="Rhea" id="RHEA-COMP:10145"/>
        <dbReference type="Rhea" id="RHEA-COMP:10147"/>
        <dbReference type="ChEBI" id="CHEBI:15378"/>
        <dbReference type="ChEBI" id="CHEBI:57856"/>
        <dbReference type="ChEBI" id="CHEBI:59789"/>
        <dbReference type="ChEBI" id="CHEBI:73542"/>
        <dbReference type="ChEBI" id="CHEBI:74269"/>
        <dbReference type="EC" id="2.1.1.228"/>
    </reaction>
</comment>
<comment type="subunit">
    <text evidence="1">Homodimer.</text>
</comment>
<comment type="subcellular location">
    <subcellularLocation>
        <location evidence="1">Cytoplasm</location>
    </subcellularLocation>
</comment>
<comment type="similarity">
    <text evidence="1">Belongs to the RNA methyltransferase TrmD family.</text>
</comment>
<accession>Q6G1R9</accession>
<proteinExistence type="evidence at protein level"/>
<evidence type="ECO:0000255" key="1">
    <source>
        <dbReference type="HAMAP-Rule" id="MF_00605"/>
    </source>
</evidence>
<evidence type="ECO:0007829" key="2">
    <source>
        <dbReference type="PDB" id="3IEF"/>
    </source>
</evidence>
<keyword id="KW-0002">3D-structure</keyword>
<keyword id="KW-0963">Cytoplasm</keyword>
<keyword id="KW-0489">Methyltransferase</keyword>
<keyword id="KW-0949">S-adenosyl-L-methionine</keyword>
<keyword id="KW-0808">Transferase</keyword>
<keyword id="KW-0819">tRNA processing</keyword>
<reference key="1">
    <citation type="journal article" date="2004" name="Proc. Natl. Acad. Sci. U.S.A.">
        <title>The louse-borne human pathogen Bartonella quintana is a genomic derivative of the zoonotic agent Bartonella henselae.</title>
        <authorList>
            <person name="Alsmark U.C.M."/>
            <person name="Frank A.C."/>
            <person name="Karlberg E.O."/>
            <person name="Legault B.-A."/>
            <person name="Ardell D.H."/>
            <person name="Canbaeck B."/>
            <person name="Eriksson A.-S."/>
            <person name="Naeslund A.K."/>
            <person name="Handley S.A."/>
            <person name="Huvet M."/>
            <person name="La Scola B."/>
            <person name="Holmberg M."/>
            <person name="Andersson S.G.E."/>
        </authorList>
    </citation>
    <scope>NUCLEOTIDE SEQUENCE [LARGE SCALE GENOMIC DNA]</scope>
    <source>
        <strain>ATCC 49882 / DSM 28221 / CCUG 30454 / Houston 1</strain>
    </source>
</reference>
<feature type="chain" id="PRO_0000060331" description="tRNA (guanine-N(1)-)-methyltransferase">
    <location>
        <begin position="1"/>
        <end position="232"/>
    </location>
</feature>
<feature type="binding site" evidence="1">
    <location>
        <position position="111"/>
    </location>
    <ligand>
        <name>S-adenosyl-L-methionine</name>
        <dbReference type="ChEBI" id="CHEBI:59789"/>
    </ligand>
</feature>
<feature type="binding site" evidence="1">
    <location>
        <begin position="131"/>
        <end position="136"/>
    </location>
    <ligand>
        <name>S-adenosyl-L-methionine</name>
        <dbReference type="ChEBI" id="CHEBI:59789"/>
    </ligand>
</feature>
<feature type="strand" evidence="2">
    <location>
        <begin position="3"/>
        <end position="10"/>
    </location>
</feature>
<feature type="helix" evidence="2">
    <location>
        <begin position="12"/>
        <end position="14"/>
    </location>
</feature>
<feature type="helix" evidence="2">
    <location>
        <begin position="17"/>
        <end position="20"/>
    </location>
</feature>
<feature type="helix" evidence="2">
    <location>
        <begin position="22"/>
        <end position="29"/>
    </location>
</feature>
<feature type="strand" evidence="2">
    <location>
        <begin position="32"/>
        <end position="39"/>
    </location>
</feature>
<feature type="helix" evidence="2">
    <location>
        <begin position="40"/>
        <end position="43"/>
    </location>
</feature>
<feature type="helix" evidence="2">
    <location>
        <begin position="66"/>
        <end position="73"/>
    </location>
</feature>
<feature type="strand" evidence="2">
    <location>
        <begin position="82"/>
        <end position="85"/>
    </location>
</feature>
<feature type="strand" evidence="2">
    <location>
        <begin position="89"/>
        <end position="91"/>
    </location>
</feature>
<feature type="helix" evidence="2">
    <location>
        <begin position="94"/>
        <end position="100"/>
    </location>
</feature>
<feature type="strand" evidence="2">
    <location>
        <begin position="103"/>
        <end position="110"/>
    </location>
</feature>
<feature type="helix" evidence="2">
    <location>
        <begin position="118"/>
        <end position="123"/>
    </location>
</feature>
<feature type="strand" evidence="2">
    <location>
        <begin position="127"/>
        <end position="134"/>
    </location>
</feature>
<feature type="helix" evidence="2">
    <location>
        <begin position="139"/>
        <end position="151"/>
    </location>
</feature>
<feature type="strand" evidence="2">
    <location>
        <begin position="157"/>
        <end position="159"/>
    </location>
</feature>
<feature type="helix" evidence="2">
    <location>
        <begin position="160"/>
        <end position="162"/>
    </location>
</feature>
<feature type="helix" evidence="2">
    <location>
        <begin position="168"/>
        <end position="171"/>
    </location>
</feature>
<feature type="strand" evidence="2">
    <location>
        <begin position="181"/>
        <end position="185"/>
    </location>
</feature>
<feature type="helix" evidence="2">
    <location>
        <begin position="192"/>
        <end position="195"/>
    </location>
</feature>
<feature type="helix" evidence="2">
    <location>
        <begin position="199"/>
        <end position="217"/>
    </location>
</feature>
<feature type="helix" evidence="2">
    <location>
        <begin position="219"/>
        <end position="228"/>
    </location>
</feature>
<gene>
    <name evidence="1" type="primary">trmD</name>
    <name type="ordered locus">BH15820</name>
</gene>